<keyword id="KW-0903">Direct protein sequencing</keyword>
<keyword id="KW-0472">Membrane</keyword>
<keyword id="KW-1185">Reference proteome</keyword>
<gene>
    <name type="primary">SPA17</name>
    <name type="synonym">SP17</name>
</gene>
<accession>P36425</accession>
<comment type="function">
    <text>Sperm surface zona pellucida binding protein. Helps to bind spermatozoa to the zona pellucida with high affinity. Might function in binding zona pellucida and carbohydrates.</text>
</comment>
<comment type="subunit">
    <text evidence="1">Homodimer. May interact with ROPN1 (By similarity).</text>
</comment>
<comment type="subcellular location">
    <subcellularLocation>
        <location evidence="4">Membrane</location>
        <topology evidence="4">Peripheral membrane protein</topology>
    </subcellularLocation>
</comment>
<comment type="tissue specificity">
    <text>Testis- and sperm-specific.</text>
</comment>
<comment type="PTM">
    <text>The N-terminus is blocked.</text>
</comment>
<name>SP17_RABIT</name>
<feature type="chain" id="PRO_0000181346" description="Sperm surface protein Sp17">
    <location>
        <begin position="1"/>
        <end position="146"/>
    </location>
</feature>
<feature type="domain" description="IQ" evidence="2">
    <location>
        <begin position="110"/>
        <end position="139"/>
    </location>
</feature>
<feature type="region of interest" description="Disordered" evidence="3">
    <location>
        <begin position="76"/>
        <end position="109"/>
    </location>
</feature>
<feature type="compositionally biased region" description="Basic and acidic residues" evidence="3">
    <location>
        <begin position="76"/>
        <end position="88"/>
    </location>
</feature>
<feature type="compositionally biased region" description="Acidic residues" evidence="3">
    <location>
        <begin position="92"/>
        <end position="108"/>
    </location>
</feature>
<reference key="1">
    <citation type="journal article" date="1994" name="Dev. Biol.">
        <title>Sequence of a rabbit sperm zona pellucida binding protein and localization during the acrosome reaction.</title>
        <authorList>
            <person name="Richardson R.T."/>
            <person name="Yamasaki N."/>
            <person name="O'Rand M.G."/>
        </authorList>
    </citation>
    <scope>NUCLEOTIDE SEQUENCE [MRNA]</scope>
    <scope>PROTEIN SEQUENCE OF 113-126</scope>
    <source>
        <strain>New Zealand white</strain>
        <tissue>Testis</tissue>
    </source>
</reference>
<sequence length="146" mass="16892">MSIPFSNTHYRIPQGFGNLLEGLTREILREQPDNIPAFAAAYFENLLEKREKTNFDPAEWGAKVDDRFYNNHAFQEHESEKCEAEEKSQSVTEEETPVLTIDSEDDKDKEEMAALKIQAAFRGHLAREDVKKIRTNKAEEETEENN</sequence>
<proteinExistence type="evidence at protein level"/>
<organism>
    <name type="scientific">Oryctolagus cuniculus</name>
    <name type="common">Rabbit</name>
    <dbReference type="NCBI Taxonomy" id="9986"/>
    <lineage>
        <taxon>Eukaryota</taxon>
        <taxon>Metazoa</taxon>
        <taxon>Chordata</taxon>
        <taxon>Craniata</taxon>
        <taxon>Vertebrata</taxon>
        <taxon>Euteleostomi</taxon>
        <taxon>Mammalia</taxon>
        <taxon>Eutheria</taxon>
        <taxon>Euarchontoglires</taxon>
        <taxon>Glires</taxon>
        <taxon>Lagomorpha</taxon>
        <taxon>Leporidae</taxon>
        <taxon>Oryctolagus</taxon>
    </lineage>
</organism>
<dbReference type="EMBL" id="Z20655">
    <property type="protein sequence ID" value="CAA79674.1"/>
    <property type="molecule type" value="mRNA"/>
</dbReference>
<dbReference type="PIR" id="I46506">
    <property type="entry name" value="I46506"/>
</dbReference>
<dbReference type="RefSeq" id="NP_001076095.1">
    <property type="nucleotide sequence ID" value="NM_001082626.1"/>
</dbReference>
<dbReference type="SMR" id="P36425"/>
<dbReference type="FunCoup" id="P36425">
    <property type="interactions" value="35"/>
</dbReference>
<dbReference type="STRING" id="9986.ENSOCUP00000042432"/>
<dbReference type="PaxDb" id="9986-ENSOCUP00000002646"/>
<dbReference type="Ensembl" id="ENSOCUT00000003042.4">
    <property type="protein sequence ID" value="ENSOCUP00000002646.2"/>
    <property type="gene ID" value="ENSOCUG00000003044.4"/>
</dbReference>
<dbReference type="GeneID" id="100009312"/>
<dbReference type="KEGG" id="ocu:100009312"/>
<dbReference type="CTD" id="53340"/>
<dbReference type="eggNOG" id="ENOG502S4R6">
    <property type="taxonomic scope" value="Eukaryota"/>
</dbReference>
<dbReference type="GeneTree" id="ENSGT00440000039164"/>
<dbReference type="HOGENOM" id="CLU_115900_0_0_1"/>
<dbReference type="InParanoid" id="P36425"/>
<dbReference type="OMA" id="STHYRIP"/>
<dbReference type="OrthoDB" id="252964at2759"/>
<dbReference type="TreeFam" id="TF332959"/>
<dbReference type="Proteomes" id="UP000001811">
    <property type="component" value="Chromosome 1"/>
</dbReference>
<dbReference type="Bgee" id="ENSOCUG00000003044">
    <property type="expression patterns" value="Expressed in testis and 16 other cell types or tissues"/>
</dbReference>
<dbReference type="GO" id="GO:0005737">
    <property type="term" value="C:cytoplasm"/>
    <property type="evidence" value="ECO:0007669"/>
    <property type="project" value="TreeGrafter"/>
</dbReference>
<dbReference type="GO" id="GO:0016020">
    <property type="term" value="C:membrane"/>
    <property type="evidence" value="ECO:0007669"/>
    <property type="project" value="UniProtKB-SubCell"/>
</dbReference>
<dbReference type="GO" id="GO:0035686">
    <property type="term" value="C:sperm fibrous sheath"/>
    <property type="evidence" value="ECO:0007669"/>
    <property type="project" value="TreeGrafter"/>
</dbReference>
<dbReference type="GO" id="GO:0097228">
    <property type="term" value="C:sperm principal piece"/>
    <property type="evidence" value="ECO:0007669"/>
    <property type="project" value="TreeGrafter"/>
</dbReference>
<dbReference type="GO" id="GO:0005516">
    <property type="term" value="F:calmodulin binding"/>
    <property type="evidence" value="ECO:0007669"/>
    <property type="project" value="TreeGrafter"/>
</dbReference>
<dbReference type="GO" id="GO:0008201">
    <property type="term" value="F:heparin binding"/>
    <property type="evidence" value="ECO:0000314"/>
    <property type="project" value="GO_Central"/>
</dbReference>
<dbReference type="GO" id="GO:0007339">
    <property type="term" value="P:binding of sperm to zona pellucida"/>
    <property type="evidence" value="ECO:0000314"/>
    <property type="project" value="GO_Central"/>
</dbReference>
<dbReference type="CDD" id="cd12100">
    <property type="entry name" value="DD_CABYR_SP17"/>
    <property type="match status" value="1"/>
</dbReference>
<dbReference type="FunFam" id="1.20.5.190:FF:000045">
    <property type="entry name" value="Sperm surface protein Sp17"/>
    <property type="match status" value="1"/>
</dbReference>
<dbReference type="FunFam" id="1.20.890.10:FF:000006">
    <property type="entry name" value="Sperm surface protein Sp17"/>
    <property type="match status" value="1"/>
</dbReference>
<dbReference type="Gene3D" id="1.20.5.190">
    <property type="match status" value="1"/>
</dbReference>
<dbReference type="Gene3D" id="1.20.890.10">
    <property type="entry name" value="cAMP-dependent protein kinase regulatory subunit, dimerization-anchoring domain"/>
    <property type="match status" value="1"/>
</dbReference>
<dbReference type="InterPro" id="IPR003117">
    <property type="entry name" value="cAMP_dep_PK_reg_su_I/II_a/b"/>
</dbReference>
<dbReference type="InterPro" id="IPR047579">
    <property type="entry name" value="DD_CABYR_SP17"/>
</dbReference>
<dbReference type="InterPro" id="IPR000048">
    <property type="entry name" value="IQ_motif_EF-hand-BS"/>
</dbReference>
<dbReference type="InterPro" id="IPR012105">
    <property type="entry name" value="Sp17"/>
</dbReference>
<dbReference type="PANTHER" id="PTHR10699">
    <property type="entry name" value="NEUROMODULIN"/>
    <property type="match status" value="1"/>
</dbReference>
<dbReference type="PANTHER" id="PTHR10699:SF16">
    <property type="entry name" value="SPERM SURFACE PROTEIN SP17"/>
    <property type="match status" value="1"/>
</dbReference>
<dbReference type="Pfam" id="PF00612">
    <property type="entry name" value="IQ"/>
    <property type="match status" value="1"/>
</dbReference>
<dbReference type="Pfam" id="PF02197">
    <property type="entry name" value="RIIa"/>
    <property type="match status" value="1"/>
</dbReference>
<dbReference type="PIRSF" id="PIRSF016533">
    <property type="entry name" value="Sp17"/>
    <property type="match status" value="1"/>
</dbReference>
<dbReference type="SMART" id="SM00015">
    <property type="entry name" value="IQ"/>
    <property type="match status" value="1"/>
</dbReference>
<dbReference type="SMART" id="SM00394">
    <property type="entry name" value="RIIa"/>
    <property type="match status" value="1"/>
</dbReference>
<dbReference type="SUPFAM" id="SSF47391">
    <property type="entry name" value="Dimerization-anchoring domain of cAMP-dependent PK regulatory subunit"/>
    <property type="match status" value="1"/>
</dbReference>
<dbReference type="PROSITE" id="PS50096">
    <property type="entry name" value="IQ"/>
    <property type="match status" value="1"/>
</dbReference>
<evidence type="ECO:0000250" key="1"/>
<evidence type="ECO:0000255" key="2">
    <source>
        <dbReference type="PROSITE-ProRule" id="PRU00116"/>
    </source>
</evidence>
<evidence type="ECO:0000256" key="3">
    <source>
        <dbReference type="SAM" id="MobiDB-lite"/>
    </source>
</evidence>
<evidence type="ECO:0000305" key="4"/>
<protein>
    <recommendedName>
        <fullName>Sperm surface protein Sp17</fullName>
    </recommendedName>
    <alternativeName>
        <fullName>Sperm autoantigenic protein 17</fullName>
    </alternativeName>
</protein>